<dbReference type="EMBL" id="KX010951">
    <property type="protein sequence ID" value="ANC73371.1"/>
    <property type="molecule type" value="mRNA"/>
</dbReference>
<dbReference type="GO" id="GO:0005576">
    <property type="term" value="C:extracellular region"/>
    <property type="evidence" value="ECO:0007669"/>
    <property type="project" value="UniProtKB-SubCell"/>
</dbReference>
<dbReference type="GO" id="GO:0030430">
    <property type="term" value="C:host cell cytoplasm"/>
    <property type="evidence" value="ECO:0007669"/>
    <property type="project" value="UniProtKB-SubCell"/>
</dbReference>
<dbReference type="GO" id="GO:0042025">
    <property type="term" value="C:host cell nucleus"/>
    <property type="evidence" value="ECO:0007669"/>
    <property type="project" value="UniProtKB-SubCell"/>
</dbReference>
<proteinExistence type="evidence at transcript level"/>
<name>RLR11_PLAVT</name>
<protein>
    <recommendedName>
        <fullName evidence="4">Secreted RxLR effector protein 11</fullName>
    </recommendedName>
</protein>
<sequence>MRLNFTKLFAGAVALAWTTESMATNAVTAHLSPLSRSLDHIQSDDSTQRRLRTINGADEERFSRMSMAGLRRALELELKEMHLESVATNQLVVRICTILGIEVAKSTPTNLNKLAELIKVEKEAENVAKKVQNPVDQADVILGLLIYPVKQGDVLGNKLLEKWPLLPKKAIINRFHRLKNHEVPKEPQPFAAHVHAPVVVAH</sequence>
<comment type="function">
    <text evidence="2 3">Effector that acts as a broad suppressor of cell death to interrupt plant immunity. Inhibits cell death induced by cell death-inducing proteins, including the PAMP elicitor INF1 from P.infestans.</text>
</comment>
<comment type="subcellular location">
    <subcellularLocation>
        <location evidence="2">Secreted</location>
    </subcellularLocation>
    <subcellularLocation>
        <location evidence="2">Host cytoplasm</location>
    </subcellularLocation>
    <subcellularLocation>
        <location evidence="2">Host nucleus</location>
    </subcellularLocation>
</comment>
<comment type="induction">
    <text evidence="2 3">Expression is up-regulated at later stages of infection.</text>
</comment>
<comment type="domain">
    <text evidence="6">The RxLR-dEER motif acts to carry the protein into the host cell cytoplasm through binding to cell surface phosphatidylinositol-3-phosphate.</text>
</comment>
<comment type="similarity">
    <text evidence="5">Belongs to the RxLR effector family.</text>
</comment>
<reference key="1">
    <citation type="journal article" date="2016" name="Front. Microbiol.">
        <title>Studying the mechanism of Plasmopara viticola RxLR effectors on suppressing plant immunity.</title>
        <authorList>
            <person name="Xiang J."/>
            <person name="Li X."/>
            <person name="Wu J."/>
            <person name="Yin L."/>
            <person name="Zhang Y."/>
            <person name="Lu J."/>
        </authorList>
    </citation>
    <scope>NUCLEOTIDE SEQUENCE [MRNA]</scope>
    <scope>INDUCTION</scope>
    <scope>FUNCTION</scope>
    <scope>SUBCELLULAR LOCATION</scope>
    <source>
        <strain>ZJ-1-1</strain>
    </source>
</reference>
<reference key="2">
    <citation type="journal article" date="2015" name="Physiol. Mol. Plant Pathol.">
        <title>Characterization of the secretome of Plasmopara viticola by de novo transcriptome analysis.</title>
        <authorList>
            <person name="Yin L."/>
            <person name="Li X."/>
            <person name="Xiang J."/>
            <person name="Qu J."/>
            <person name="Zhang Y."/>
            <person name="Dry I.B."/>
            <person name="Lu J."/>
        </authorList>
    </citation>
    <scope>IDENTIFICATION</scope>
    <scope>INDUCTION</scope>
    <scope>FUNCTION</scope>
    <scope>DOMAIN</scope>
</reference>
<gene>
    <name evidence="4" type="primary">RxLR11</name>
</gene>
<organism>
    <name type="scientific">Plasmopara viticola</name>
    <name type="common">Downy mildew of grapevine</name>
    <name type="synonym">Botrytis viticola</name>
    <dbReference type="NCBI Taxonomy" id="143451"/>
    <lineage>
        <taxon>Eukaryota</taxon>
        <taxon>Sar</taxon>
        <taxon>Stramenopiles</taxon>
        <taxon>Oomycota</taxon>
        <taxon>Peronosporales</taxon>
        <taxon>Peronosporaceae</taxon>
        <taxon>Plasmopara</taxon>
    </lineage>
</organism>
<feature type="signal peptide" evidence="1">
    <location>
        <begin position="1"/>
        <end position="23"/>
    </location>
</feature>
<feature type="chain" id="PRO_5008116085" description="Secreted RxLR effector protein 11">
    <location>
        <begin position="24"/>
        <end position="202"/>
    </location>
</feature>
<feature type="short sequence motif" description="RxLR-dEER" evidence="6">
    <location>
        <begin position="49"/>
        <end position="61"/>
    </location>
</feature>
<accession>A0A182BSR8</accession>
<evidence type="ECO:0000255" key="1"/>
<evidence type="ECO:0000269" key="2">
    <source>
    </source>
</evidence>
<evidence type="ECO:0000269" key="3">
    <source ref="2"/>
</evidence>
<evidence type="ECO:0000303" key="4">
    <source ref="2"/>
</evidence>
<evidence type="ECO:0000305" key="5"/>
<evidence type="ECO:0000305" key="6">
    <source ref="2"/>
</evidence>
<keyword id="KW-1035">Host cytoplasm</keyword>
<keyword id="KW-1048">Host nucleus</keyword>
<keyword id="KW-0964">Secreted</keyword>
<keyword id="KW-0732">Signal</keyword>
<keyword id="KW-0843">Virulence</keyword>